<protein>
    <recommendedName>
        <fullName evidence="1">Mycothiol acetyltransferase</fullName>
        <shortName evidence="1">MSH acetyltransferase</shortName>
        <ecNumber evidence="1">2.3.1.189</ecNumber>
    </recommendedName>
    <alternativeName>
        <fullName evidence="1">Mycothiol synthase</fullName>
    </alternativeName>
</protein>
<feature type="chain" id="PRO_0000400274" description="Mycothiol acetyltransferase">
    <location>
        <begin position="1"/>
        <end position="320"/>
    </location>
</feature>
<feature type="domain" description="N-acetyltransferase 1" evidence="1">
    <location>
        <begin position="16"/>
        <end position="141"/>
    </location>
</feature>
<feature type="domain" description="N-acetyltransferase 2" evidence="1">
    <location>
        <begin position="152"/>
        <end position="320"/>
    </location>
</feature>
<feature type="binding site" evidence="1">
    <location>
        <position position="36"/>
    </location>
    <ligand>
        <name>1D-myo-inositol 2-(L-cysteinylamino)-2-deoxy-alpha-D-glucopyranoside</name>
        <dbReference type="ChEBI" id="CHEBI:58887"/>
    </ligand>
</feature>
<feature type="binding site" evidence="1">
    <location>
        <begin position="80"/>
        <end position="82"/>
    </location>
    <ligand>
        <name>acetyl-CoA</name>
        <dbReference type="ChEBI" id="CHEBI:57288"/>
        <label>1</label>
    </ligand>
</feature>
<feature type="binding site" evidence="1">
    <location>
        <begin position="88"/>
        <end position="93"/>
    </location>
    <ligand>
        <name>acetyl-CoA</name>
        <dbReference type="ChEBI" id="CHEBI:57288"/>
        <label>1</label>
    </ligand>
</feature>
<feature type="binding site" evidence="1">
    <location>
        <position position="179"/>
    </location>
    <ligand>
        <name>1D-myo-inositol 2-(L-cysteinylamino)-2-deoxy-alpha-D-glucopyranoside</name>
        <dbReference type="ChEBI" id="CHEBI:58887"/>
    </ligand>
</feature>
<feature type="binding site" evidence="1">
    <location>
        <position position="229"/>
    </location>
    <ligand>
        <name>1D-myo-inositol 2-(L-cysteinylamino)-2-deoxy-alpha-D-glucopyranoside</name>
        <dbReference type="ChEBI" id="CHEBI:58887"/>
    </ligand>
</feature>
<feature type="binding site" evidence="1">
    <location>
        <position position="239"/>
    </location>
    <ligand>
        <name>1D-myo-inositol 2-(L-cysteinylamino)-2-deoxy-alpha-D-glucopyranoside</name>
        <dbReference type="ChEBI" id="CHEBI:58887"/>
    </ligand>
</feature>
<feature type="binding site" evidence="1">
    <location>
        <begin position="243"/>
        <end position="245"/>
    </location>
    <ligand>
        <name>acetyl-CoA</name>
        <dbReference type="ChEBI" id="CHEBI:57288"/>
        <label>2</label>
    </ligand>
</feature>
<feature type="binding site" evidence="1">
    <location>
        <begin position="250"/>
        <end position="256"/>
    </location>
    <ligand>
        <name>acetyl-CoA</name>
        <dbReference type="ChEBI" id="CHEBI:57288"/>
        <label>2</label>
    </ligand>
</feature>
<feature type="binding site" evidence="1">
    <location>
        <position position="284"/>
    </location>
    <ligand>
        <name>1D-myo-inositol 2-(L-cysteinylamino)-2-deoxy-alpha-D-glucopyranoside</name>
        <dbReference type="ChEBI" id="CHEBI:58887"/>
    </ligand>
</feature>
<feature type="binding site" evidence="1">
    <location>
        <begin position="289"/>
        <end position="294"/>
    </location>
    <ligand>
        <name>acetyl-CoA</name>
        <dbReference type="ChEBI" id="CHEBI:57288"/>
        <label>2</label>
    </ligand>
</feature>
<accession>B2HH13</accession>
<reference key="1">
    <citation type="journal article" date="2008" name="Genome Res.">
        <title>Insights from the complete genome sequence of Mycobacterium marinum on the evolution of Mycobacterium tuberculosis.</title>
        <authorList>
            <person name="Stinear T.P."/>
            <person name="Seemann T."/>
            <person name="Harrison P.F."/>
            <person name="Jenkin G.A."/>
            <person name="Davies J.K."/>
            <person name="Johnson P.D."/>
            <person name="Abdellah Z."/>
            <person name="Arrowsmith C."/>
            <person name="Chillingworth T."/>
            <person name="Churcher C."/>
            <person name="Clarke K."/>
            <person name="Cronin A."/>
            <person name="Davis P."/>
            <person name="Goodhead I."/>
            <person name="Holroyd N."/>
            <person name="Jagels K."/>
            <person name="Lord A."/>
            <person name="Moule S."/>
            <person name="Mungall K."/>
            <person name="Norbertczak H."/>
            <person name="Quail M.A."/>
            <person name="Rabbinowitsch E."/>
            <person name="Walker D."/>
            <person name="White B."/>
            <person name="Whitehead S."/>
            <person name="Small P.L."/>
            <person name="Brosch R."/>
            <person name="Ramakrishnan L."/>
            <person name="Fischbach M.A."/>
            <person name="Parkhill J."/>
            <person name="Cole S.T."/>
        </authorList>
    </citation>
    <scope>NUCLEOTIDE SEQUENCE [LARGE SCALE GENOMIC DNA]</scope>
    <source>
        <strain>ATCC BAA-535 / M</strain>
    </source>
</reference>
<keyword id="KW-0012">Acyltransferase</keyword>
<keyword id="KW-1185">Reference proteome</keyword>
<keyword id="KW-0677">Repeat</keyword>
<keyword id="KW-0808">Transferase</keyword>
<comment type="function">
    <text evidence="1">Catalyzes the transfer of acetyl from acetyl-CoA to desacetylmycothiol (Cys-GlcN-Ins) to form mycothiol.</text>
</comment>
<comment type="catalytic activity">
    <reaction evidence="1">
        <text>1D-myo-inositol 2-(L-cysteinylamino)-2-deoxy-alpha-D-glucopyranoside + acetyl-CoA = mycothiol + CoA + H(+)</text>
        <dbReference type="Rhea" id="RHEA:26172"/>
        <dbReference type="ChEBI" id="CHEBI:15378"/>
        <dbReference type="ChEBI" id="CHEBI:16768"/>
        <dbReference type="ChEBI" id="CHEBI:57287"/>
        <dbReference type="ChEBI" id="CHEBI:57288"/>
        <dbReference type="ChEBI" id="CHEBI:58887"/>
        <dbReference type="EC" id="2.3.1.189"/>
    </reaction>
</comment>
<comment type="subunit">
    <text evidence="1">Monomer.</text>
</comment>
<comment type="similarity">
    <text evidence="1">Belongs to the acetyltransferase family. MshD subfamily.</text>
</comment>
<sequence length="320" mass="34530">MTAVQWRSHLTDDQQRQVRDLVTAATQVDGVAPVGEQVLRELAQQRTEHLLVEDQSPGKSAIGYLNLSPAHGADAAMAELVVHPQARRRGIATAMVRAALAKTGGRNQFWAHGTLAPAQATASALGLTPVRELVQMRRSLRQLPEPVIPNGLQIRTYAGTEDDAELLRVNNAAFAYHPEQGGWTEADLAERRGEPWFDPAGLFLALEGSEGAEDSPRGQPRLLGFHWTKIHLDDPGLGEVYVLGVDPAAQGRGLGRTLTMIGLRSLAQRLGDRDLGRESTVMLYVESDNIAAVRTYQGLGFSTHSVDTAYALAAPDAALA</sequence>
<dbReference type="EC" id="2.3.1.189" evidence="1"/>
<dbReference type="EMBL" id="CP000854">
    <property type="protein sequence ID" value="ACC43268.1"/>
    <property type="molecule type" value="Genomic_DNA"/>
</dbReference>
<dbReference type="RefSeq" id="WP_012396396.1">
    <property type="nucleotide sequence ID" value="NC_010612.1"/>
</dbReference>
<dbReference type="SMR" id="B2HH13"/>
<dbReference type="STRING" id="216594.MMAR_4864"/>
<dbReference type="KEGG" id="mmi:MMAR_4864"/>
<dbReference type="eggNOG" id="COG0454">
    <property type="taxonomic scope" value="Bacteria"/>
</dbReference>
<dbReference type="eggNOG" id="COG0456">
    <property type="taxonomic scope" value="Bacteria"/>
</dbReference>
<dbReference type="HOGENOM" id="CLU_068014_0_0_11"/>
<dbReference type="OrthoDB" id="3208058at2"/>
<dbReference type="Proteomes" id="UP000001190">
    <property type="component" value="Chromosome"/>
</dbReference>
<dbReference type="GO" id="GO:0035447">
    <property type="term" value="F:mycothiol synthase activity"/>
    <property type="evidence" value="ECO:0007669"/>
    <property type="project" value="UniProtKB-UniRule"/>
</dbReference>
<dbReference type="GO" id="GO:0008999">
    <property type="term" value="F:protein-N-terminal-alanine acetyltransferase activity"/>
    <property type="evidence" value="ECO:0007669"/>
    <property type="project" value="TreeGrafter"/>
</dbReference>
<dbReference type="GO" id="GO:0010125">
    <property type="term" value="P:mycothiol biosynthetic process"/>
    <property type="evidence" value="ECO:0007669"/>
    <property type="project" value="UniProtKB-UniRule"/>
</dbReference>
<dbReference type="CDD" id="cd04301">
    <property type="entry name" value="NAT_SF"/>
    <property type="match status" value="2"/>
</dbReference>
<dbReference type="Gene3D" id="3.40.630.30">
    <property type="match status" value="1"/>
</dbReference>
<dbReference type="HAMAP" id="MF_01698">
    <property type="entry name" value="MshD"/>
    <property type="match status" value="1"/>
</dbReference>
<dbReference type="InterPro" id="IPR016181">
    <property type="entry name" value="Acyl_CoA_acyltransferase"/>
</dbReference>
<dbReference type="InterPro" id="IPR000182">
    <property type="entry name" value="GNAT_dom"/>
</dbReference>
<dbReference type="InterPro" id="IPR050276">
    <property type="entry name" value="MshD_Acetyltransferase"/>
</dbReference>
<dbReference type="InterPro" id="IPR017813">
    <property type="entry name" value="Mycothiol_AcTrfase"/>
</dbReference>
<dbReference type="NCBIfam" id="TIGR03448">
    <property type="entry name" value="mycothiol_MshD"/>
    <property type="match status" value="1"/>
</dbReference>
<dbReference type="PANTHER" id="PTHR43617">
    <property type="entry name" value="L-AMINO ACID N-ACETYLTRANSFERASE"/>
    <property type="match status" value="1"/>
</dbReference>
<dbReference type="PANTHER" id="PTHR43617:SF31">
    <property type="entry name" value="MYCOTHIOL ACETYLTRANSFERASE"/>
    <property type="match status" value="1"/>
</dbReference>
<dbReference type="Pfam" id="PF00583">
    <property type="entry name" value="Acetyltransf_1"/>
    <property type="match status" value="2"/>
</dbReference>
<dbReference type="PIRSF" id="PIRSF021524">
    <property type="entry name" value="MSH_acetyltransferase"/>
    <property type="match status" value="1"/>
</dbReference>
<dbReference type="SUPFAM" id="SSF55729">
    <property type="entry name" value="Acyl-CoA N-acyltransferases (Nat)"/>
    <property type="match status" value="1"/>
</dbReference>
<dbReference type="PROSITE" id="PS51186">
    <property type="entry name" value="GNAT"/>
    <property type="match status" value="2"/>
</dbReference>
<name>MSHD_MYCMM</name>
<proteinExistence type="inferred from homology"/>
<organism>
    <name type="scientific">Mycobacterium marinum (strain ATCC BAA-535 / M)</name>
    <dbReference type="NCBI Taxonomy" id="216594"/>
    <lineage>
        <taxon>Bacteria</taxon>
        <taxon>Bacillati</taxon>
        <taxon>Actinomycetota</taxon>
        <taxon>Actinomycetes</taxon>
        <taxon>Mycobacteriales</taxon>
        <taxon>Mycobacteriaceae</taxon>
        <taxon>Mycobacterium</taxon>
        <taxon>Mycobacterium ulcerans group</taxon>
    </lineage>
</organism>
<evidence type="ECO:0000255" key="1">
    <source>
        <dbReference type="HAMAP-Rule" id="MF_01698"/>
    </source>
</evidence>
<gene>
    <name evidence="1" type="primary">mshD</name>
    <name type="ordered locus">MMAR_4864</name>
</gene>